<evidence type="ECO:0000255" key="1">
    <source>
        <dbReference type="HAMAP-Rule" id="MF_00305"/>
    </source>
</evidence>
<reference key="1">
    <citation type="journal article" date="2015" name="Microbiology">
        <title>Genome of Methanoregula boonei 6A8 reveals adaptations to oligotrophic peatland environments.</title>
        <authorList>
            <person name="Braeuer S."/>
            <person name="Cadillo-Quiroz H."/>
            <person name="Kyrpides N."/>
            <person name="Woyke T."/>
            <person name="Goodwin L."/>
            <person name="Detter C."/>
            <person name="Podell S."/>
            <person name="Yavitt J.B."/>
            <person name="Zinder S.H."/>
        </authorList>
    </citation>
    <scope>NUCLEOTIDE SEQUENCE [LARGE SCALE GENOMIC DNA]</scope>
    <source>
        <strain>DSM 21154 / JCM 14090 / 6A8</strain>
    </source>
</reference>
<keyword id="KW-0963">Cytoplasm</keyword>
<keyword id="KW-1185">Reference proteome</keyword>
<keyword id="KW-0687">Ribonucleoprotein</keyword>
<keyword id="KW-0694">RNA-binding</keyword>
<keyword id="KW-0733">Signal recognition particle</keyword>
<feature type="chain" id="PRO_0000322230" description="Signal recognition particle 19 kDa protein">
    <location>
        <begin position="1"/>
        <end position="91"/>
    </location>
</feature>
<name>SRP19_METB6</name>
<gene>
    <name evidence="1" type="primary">srp19</name>
    <name type="ordered locus">Mboo_2309</name>
</gene>
<sequence>MEKGECILYPCYFNAALSRAEGRRVPRNIAAKGPNANDVERALRRLGIACQAEEHHHPAHWARHEGRIIATYTGKKEALIKKVARAIEVRK</sequence>
<accession>A7IAR2</accession>
<proteinExistence type="inferred from homology"/>
<organism>
    <name type="scientific">Methanoregula boonei (strain DSM 21154 / JCM 14090 / 6A8)</name>
    <dbReference type="NCBI Taxonomy" id="456442"/>
    <lineage>
        <taxon>Archaea</taxon>
        <taxon>Methanobacteriati</taxon>
        <taxon>Methanobacteriota</taxon>
        <taxon>Stenosarchaea group</taxon>
        <taxon>Methanomicrobia</taxon>
        <taxon>Methanomicrobiales</taxon>
        <taxon>Methanoregulaceae</taxon>
        <taxon>Methanoregula</taxon>
    </lineage>
</organism>
<comment type="function">
    <text evidence="1">Involved in targeting and insertion of nascent membrane proteins into the cytoplasmic membrane. Binds directly to 7S RNA and mediates binding of the 54 kDa subunit of the SRP.</text>
</comment>
<comment type="subunit">
    <text evidence="1">Part of the signal recognition particle protein translocation system, which is composed of SRP and FtsY. Archaeal SRP consists of a 7S RNA molecule of 300 nucleotides and two protein subunits: SRP54 and SRP19.</text>
</comment>
<comment type="subcellular location">
    <subcellularLocation>
        <location evidence="1">Cytoplasm</location>
    </subcellularLocation>
</comment>
<comment type="similarity">
    <text evidence="1">Belongs to the SRP19 family.</text>
</comment>
<protein>
    <recommendedName>
        <fullName evidence="1">Signal recognition particle 19 kDa protein</fullName>
        <shortName evidence="1">SRP19</shortName>
    </recommendedName>
</protein>
<dbReference type="EMBL" id="CP000780">
    <property type="protein sequence ID" value="ABS56823.1"/>
    <property type="molecule type" value="Genomic_DNA"/>
</dbReference>
<dbReference type="RefSeq" id="WP_012107883.1">
    <property type="nucleotide sequence ID" value="NC_009712.1"/>
</dbReference>
<dbReference type="SMR" id="A7IAR2"/>
<dbReference type="STRING" id="456442.Mboo_2309"/>
<dbReference type="GeneID" id="5409808"/>
<dbReference type="KEGG" id="mbn:Mboo_2309"/>
<dbReference type="eggNOG" id="arCOG01217">
    <property type="taxonomic scope" value="Archaea"/>
</dbReference>
<dbReference type="HOGENOM" id="CLU_169299_0_0_2"/>
<dbReference type="OrthoDB" id="56356at2157"/>
<dbReference type="Proteomes" id="UP000002408">
    <property type="component" value="Chromosome"/>
</dbReference>
<dbReference type="GO" id="GO:0048500">
    <property type="term" value="C:signal recognition particle"/>
    <property type="evidence" value="ECO:0007669"/>
    <property type="project" value="UniProtKB-UniRule"/>
</dbReference>
<dbReference type="GO" id="GO:0008312">
    <property type="term" value="F:7S RNA binding"/>
    <property type="evidence" value="ECO:0007669"/>
    <property type="project" value="UniProtKB-UniRule"/>
</dbReference>
<dbReference type="GO" id="GO:0006617">
    <property type="term" value="P:SRP-dependent cotranslational protein targeting to membrane, signal sequence recognition"/>
    <property type="evidence" value="ECO:0007669"/>
    <property type="project" value="TreeGrafter"/>
</dbReference>
<dbReference type="Gene3D" id="3.30.56.30">
    <property type="entry name" value="Signal recognition particle, SRP19-like subunit"/>
    <property type="match status" value="1"/>
</dbReference>
<dbReference type="HAMAP" id="MF_00305">
    <property type="entry name" value="SRP19"/>
    <property type="match status" value="1"/>
</dbReference>
<dbReference type="InterPro" id="IPR002778">
    <property type="entry name" value="Signal_recog_particle_SRP19"/>
</dbReference>
<dbReference type="InterPro" id="IPR036521">
    <property type="entry name" value="SRP19-like_sf"/>
</dbReference>
<dbReference type="InterPro" id="IPR022938">
    <property type="entry name" value="SRP19_arc-type"/>
</dbReference>
<dbReference type="PANTHER" id="PTHR17453">
    <property type="entry name" value="SIGNAL RECOGNITION PARTICLE 19 KD PROTEIN"/>
    <property type="match status" value="1"/>
</dbReference>
<dbReference type="PANTHER" id="PTHR17453:SF0">
    <property type="entry name" value="SIGNAL RECOGNITION PARTICLE 19 KDA PROTEIN"/>
    <property type="match status" value="1"/>
</dbReference>
<dbReference type="Pfam" id="PF01922">
    <property type="entry name" value="SRP19"/>
    <property type="match status" value="1"/>
</dbReference>
<dbReference type="SUPFAM" id="SSF69695">
    <property type="entry name" value="SRP19"/>
    <property type="match status" value="1"/>
</dbReference>